<sequence>MDEWYGQVAPREKLLKYGAAVLTDAELLAIFLRTGIPGMHVMKMAEYLIETFGSLHGLISADYQTLCAHKGIGASKYSQIQAIGELACRCFSSHLMRESVLLNPGITQKFLQNILSHREREIFLVVFLDNQHRVIRHEEMFTGTISSVEVHPREIVREALKVNAAALILAHNHPSGKAEPSQADRLITTQVIKACSLLDIRVLDHLVVGRGECVSFAERGWL</sequence>
<gene>
    <name type="ordered locus">YPO0049</name>
    <name type="ordered locus">y0092</name>
    <name type="ordered locus">YP_0050</name>
</gene>
<feature type="chain" id="PRO_0000190758" description="UPF0758 protein YPO0049/y0092/YP_0050">
    <location>
        <begin position="1"/>
        <end position="222"/>
    </location>
</feature>
<feature type="domain" description="MPN" evidence="2">
    <location>
        <begin position="100"/>
        <end position="222"/>
    </location>
</feature>
<feature type="short sequence motif" description="JAMM motif" evidence="2">
    <location>
        <begin position="171"/>
        <end position="184"/>
    </location>
</feature>
<feature type="binding site" evidence="2">
    <location>
        <position position="171"/>
    </location>
    <ligand>
        <name>Zn(2+)</name>
        <dbReference type="ChEBI" id="CHEBI:29105"/>
        <note>catalytic</note>
    </ligand>
</feature>
<feature type="binding site" evidence="2">
    <location>
        <position position="173"/>
    </location>
    <ligand>
        <name>Zn(2+)</name>
        <dbReference type="ChEBI" id="CHEBI:29105"/>
        <note>catalytic</note>
    </ligand>
</feature>
<feature type="binding site" evidence="2">
    <location>
        <position position="184"/>
    </location>
    <ligand>
        <name>Zn(2+)</name>
        <dbReference type="ChEBI" id="CHEBI:29105"/>
        <note>catalytic</note>
    </ligand>
</feature>
<keyword id="KW-0378">Hydrolase</keyword>
<keyword id="KW-0479">Metal-binding</keyword>
<keyword id="KW-0482">Metalloprotease</keyword>
<keyword id="KW-0645">Protease</keyword>
<keyword id="KW-1185">Reference proteome</keyword>
<keyword id="KW-0862">Zinc</keyword>
<comment type="similarity">
    <text evidence="1">Belongs to the UPF0758 family. YicR subfamily.</text>
</comment>
<dbReference type="EMBL" id="AL590842">
    <property type="protein sequence ID" value="CAL18739.1"/>
    <property type="molecule type" value="Genomic_DNA"/>
</dbReference>
<dbReference type="EMBL" id="AE009952">
    <property type="protein sequence ID" value="AAM83686.1"/>
    <property type="molecule type" value="Genomic_DNA"/>
</dbReference>
<dbReference type="EMBL" id="AE017042">
    <property type="protein sequence ID" value="AAS60331.1"/>
    <property type="molecule type" value="Genomic_DNA"/>
</dbReference>
<dbReference type="PIR" id="AB0007">
    <property type="entry name" value="AB0007"/>
</dbReference>
<dbReference type="RefSeq" id="YP_002345145.1">
    <property type="nucleotide sequence ID" value="NC_003143.1"/>
</dbReference>
<dbReference type="SMR" id="Q8ZJP3"/>
<dbReference type="STRING" id="214092.YPO0049"/>
<dbReference type="PaxDb" id="214092-YPO0049"/>
<dbReference type="DNASU" id="1145039"/>
<dbReference type="EnsemblBacteria" id="AAS60331">
    <property type="protein sequence ID" value="AAS60331"/>
    <property type="gene ID" value="YP_0050"/>
</dbReference>
<dbReference type="KEGG" id="ype:YPO0049"/>
<dbReference type="KEGG" id="ypk:y0092"/>
<dbReference type="KEGG" id="ypm:YP_0050"/>
<dbReference type="PATRIC" id="fig|1028802.3.peg.437"/>
<dbReference type="eggNOG" id="COG2003">
    <property type="taxonomic scope" value="Bacteria"/>
</dbReference>
<dbReference type="HOGENOM" id="CLU_073529_0_1_6"/>
<dbReference type="OMA" id="ELMPREK"/>
<dbReference type="OrthoDB" id="9804482at2"/>
<dbReference type="Proteomes" id="UP000000815">
    <property type="component" value="Chromosome"/>
</dbReference>
<dbReference type="Proteomes" id="UP000001019">
    <property type="component" value="Chromosome"/>
</dbReference>
<dbReference type="Proteomes" id="UP000002490">
    <property type="component" value="Chromosome"/>
</dbReference>
<dbReference type="GO" id="GO:0046872">
    <property type="term" value="F:metal ion binding"/>
    <property type="evidence" value="ECO:0007669"/>
    <property type="project" value="UniProtKB-KW"/>
</dbReference>
<dbReference type="GO" id="GO:0008237">
    <property type="term" value="F:metallopeptidase activity"/>
    <property type="evidence" value="ECO:0007669"/>
    <property type="project" value="UniProtKB-KW"/>
</dbReference>
<dbReference type="GO" id="GO:0006508">
    <property type="term" value="P:proteolysis"/>
    <property type="evidence" value="ECO:0007669"/>
    <property type="project" value="UniProtKB-KW"/>
</dbReference>
<dbReference type="CDD" id="cd08071">
    <property type="entry name" value="MPN_DUF2466"/>
    <property type="match status" value="1"/>
</dbReference>
<dbReference type="Gene3D" id="3.40.140.10">
    <property type="entry name" value="Cytidine Deaminase, domain 2"/>
    <property type="match status" value="1"/>
</dbReference>
<dbReference type="HAMAP" id="MF_00018">
    <property type="entry name" value="UPF0758_YicR"/>
    <property type="match status" value="1"/>
</dbReference>
<dbReference type="InterPro" id="IPR037518">
    <property type="entry name" value="MPN"/>
</dbReference>
<dbReference type="InterPro" id="IPR025657">
    <property type="entry name" value="RadC_JAB"/>
</dbReference>
<dbReference type="InterPro" id="IPR010994">
    <property type="entry name" value="RuvA_2-like"/>
</dbReference>
<dbReference type="InterPro" id="IPR001405">
    <property type="entry name" value="UPF0758"/>
</dbReference>
<dbReference type="InterPro" id="IPR020891">
    <property type="entry name" value="UPF0758_CS"/>
</dbReference>
<dbReference type="InterPro" id="IPR046778">
    <property type="entry name" value="UPF0758_N"/>
</dbReference>
<dbReference type="InterPro" id="IPR022820">
    <property type="entry name" value="UPF0758_YicR"/>
</dbReference>
<dbReference type="NCBIfam" id="NF000642">
    <property type="entry name" value="PRK00024.1"/>
    <property type="match status" value="1"/>
</dbReference>
<dbReference type="NCBIfam" id="TIGR00608">
    <property type="entry name" value="radc"/>
    <property type="match status" value="1"/>
</dbReference>
<dbReference type="PANTHER" id="PTHR30471">
    <property type="entry name" value="DNA REPAIR PROTEIN RADC"/>
    <property type="match status" value="1"/>
</dbReference>
<dbReference type="PANTHER" id="PTHR30471:SF3">
    <property type="entry name" value="UPF0758 PROTEIN YEES-RELATED"/>
    <property type="match status" value="1"/>
</dbReference>
<dbReference type="Pfam" id="PF04002">
    <property type="entry name" value="RadC"/>
    <property type="match status" value="1"/>
</dbReference>
<dbReference type="Pfam" id="PF20582">
    <property type="entry name" value="UPF0758_N"/>
    <property type="match status" value="1"/>
</dbReference>
<dbReference type="SUPFAM" id="SSF47781">
    <property type="entry name" value="RuvA domain 2-like"/>
    <property type="match status" value="1"/>
</dbReference>
<dbReference type="PROSITE" id="PS50249">
    <property type="entry name" value="MPN"/>
    <property type="match status" value="1"/>
</dbReference>
<dbReference type="PROSITE" id="PS01302">
    <property type="entry name" value="UPF0758"/>
    <property type="match status" value="1"/>
</dbReference>
<evidence type="ECO:0000255" key="1">
    <source>
        <dbReference type="HAMAP-Rule" id="MF_00018"/>
    </source>
</evidence>
<evidence type="ECO:0000255" key="2">
    <source>
        <dbReference type="PROSITE-ProRule" id="PRU01182"/>
    </source>
</evidence>
<accession>Q8ZJP3</accession>
<accession>Q0WKP3</accession>
<protein>
    <recommendedName>
        <fullName evidence="1">UPF0758 protein YPO0049/y0092/YP_0050</fullName>
    </recommendedName>
</protein>
<name>Y049_YERPE</name>
<organism>
    <name type="scientific">Yersinia pestis</name>
    <dbReference type="NCBI Taxonomy" id="632"/>
    <lineage>
        <taxon>Bacteria</taxon>
        <taxon>Pseudomonadati</taxon>
        <taxon>Pseudomonadota</taxon>
        <taxon>Gammaproteobacteria</taxon>
        <taxon>Enterobacterales</taxon>
        <taxon>Yersiniaceae</taxon>
        <taxon>Yersinia</taxon>
    </lineage>
</organism>
<reference key="1">
    <citation type="journal article" date="2001" name="Nature">
        <title>Genome sequence of Yersinia pestis, the causative agent of plague.</title>
        <authorList>
            <person name="Parkhill J."/>
            <person name="Wren B.W."/>
            <person name="Thomson N.R."/>
            <person name="Titball R.W."/>
            <person name="Holden M.T.G."/>
            <person name="Prentice M.B."/>
            <person name="Sebaihia M."/>
            <person name="James K.D."/>
            <person name="Churcher C.M."/>
            <person name="Mungall K.L."/>
            <person name="Baker S."/>
            <person name="Basham D."/>
            <person name="Bentley S.D."/>
            <person name="Brooks K."/>
            <person name="Cerdeno-Tarraga A.-M."/>
            <person name="Chillingworth T."/>
            <person name="Cronin A."/>
            <person name="Davies R.M."/>
            <person name="Davis P."/>
            <person name="Dougan G."/>
            <person name="Feltwell T."/>
            <person name="Hamlin N."/>
            <person name="Holroyd S."/>
            <person name="Jagels K."/>
            <person name="Karlyshev A.V."/>
            <person name="Leather S."/>
            <person name="Moule S."/>
            <person name="Oyston P.C.F."/>
            <person name="Quail M.A."/>
            <person name="Rutherford K.M."/>
            <person name="Simmonds M."/>
            <person name="Skelton J."/>
            <person name="Stevens K."/>
            <person name="Whitehead S."/>
            <person name="Barrell B.G."/>
        </authorList>
    </citation>
    <scope>NUCLEOTIDE SEQUENCE [LARGE SCALE GENOMIC DNA]</scope>
    <source>
        <strain>CO-92 / Biovar Orientalis</strain>
    </source>
</reference>
<reference key="2">
    <citation type="journal article" date="2002" name="J. Bacteriol.">
        <title>Genome sequence of Yersinia pestis KIM.</title>
        <authorList>
            <person name="Deng W."/>
            <person name="Burland V."/>
            <person name="Plunkett G. III"/>
            <person name="Boutin A."/>
            <person name="Mayhew G.F."/>
            <person name="Liss P."/>
            <person name="Perna N.T."/>
            <person name="Rose D.J."/>
            <person name="Mau B."/>
            <person name="Zhou S."/>
            <person name="Schwartz D.C."/>
            <person name="Fetherston J.D."/>
            <person name="Lindler L.E."/>
            <person name="Brubaker R.R."/>
            <person name="Plano G.V."/>
            <person name="Straley S.C."/>
            <person name="McDonough K.A."/>
            <person name="Nilles M.L."/>
            <person name="Matson J.S."/>
            <person name="Blattner F.R."/>
            <person name="Perry R.D."/>
        </authorList>
    </citation>
    <scope>NUCLEOTIDE SEQUENCE [LARGE SCALE GENOMIC DNA]</scope>
    <source>
        <strain>KIM10+ / Biovar Mediaevalis</strain>
    </source>
</reference>
<reference key="3">
    <citation type="journal article" date="2004" name="DNA Res.">
        <title>Complete genome sequence of Yersinia pestis strain 91001, an isolate avirulent to humans.</title>
        <authorList>
            <person name="Song Y."/>
            <person name="Tong Z."/>
            <person name="Wang J."/>
            <person name="Wang L."/>
            <person name="Guo Z."/>
            <person name="Han Y."/>
            <person name="Zhang J."/>
            <person name="Pei D."/>
            <person name="Zhou D."/>
            <person name="Qin H."/>
            <person name="Pang X."/>
            <person name="Han Y."/>
            <person name="Zhai J."/>
            <person name="Li M."/>
            <person name="Cui B."/>
            <person name="Qi Z."/>
            <person name="Jin L."/>
            <person name="Dai R."/>
            <person name="Chen F."/>
            <person name="Li S."/>
            <person name="Ye C."/>
            <person name="Du Z."/>
            <person name="Lin W."/>
            <person name="Wang J."/>
            <person name="Yu J."/>
            <person name="Yang H."/>
            <person name="Wang J."/>
            <person name="Huang P."/>
            <person name="Yang R."/>
        </authorList>
    </citation>
    <scope>NUCLEOTIDE SEQUENCE [LARGE SCALE GENOMIC DNA]</scope>
    <source>
        <strain>91001 / Biovar Mediaevalis</strain>
    </source>
</reference>
<proteinExistence type="inferred from homology"/>